<protein>
    <recommendedName>
        <fullName evidence="6">Protein pelota homolog</fullName>
    </recommendedName>
</protein>
<comment type="function">
    <text evidence="2">Component of the Pelota-HBS1L complex, a complex that recognizes stalled ribosomes and triggers the No-Go Decay (NGD) pathway. In the Pelota-HBS1L complex, PELO recognizes ribosomes stalled at the 3' end of an mRNA and engages stalled ribosomes by destabilizing mRNA in the mRNA channel. Following mRNA extraction from stalled ribosomes by the SKI complex, the Pelota-HBS1L complex promotes recruitment of ABCE1, which drives the disassembly of stalled ribosomes, followed by degradation of damaged mRNAs as part of the NGD pathway. As part of the PINK1-regulated signaling, upon mitochondrial damage is recruited to the ribosome/mRNA-ribonucleoprotein complex associated to mitochondrial outer membrane thereby enabling the recruitment of autophagy receptors and induction of mitophagy.</text>
</comment>
<comment type="cofactor">
    <cofactor evidence="1">
        <name>a divalent metal cation</name>
        <dbReference type="ChEBI" id="CHEBI:60240"/>
    </cofactor>
</comment>
<comment type="subunit">
    <text evidence="2">Component of the Pelota-HBS1L complex, also named Dom34-Hbs1 complex, composed of PELO and HBS1L. Interacts with PINK1. Interacts with ABCE1. Interacts with CNOT4.</text>
</comment>
<comment type="interaction">
    <interactant intactId="EBI-16114899">
        <id>Q80X73</id>
    </interactant>
    <interactant intactId="EBI-16114877">
        <id>Q3UJK4</id>
        <label>Gtpbp2</label>
    </interactant>
    <organismsDiffer>false</organismsDiffer>
    <experiments>3</experiments>
</comment>
<comment type="interaction">
    <interactant intactId="EBI-16114899">
        <id>Q80X73</id>
    </interactant>
    <interactant intactId="EBI-16114976">
        <id>Q69ZS7</id>
        <label>Hbs1l</label>
    </interactant>
    <organismsDiffer>false</organismsDiffer>
    <experiments>2</experiments>
</comment>
<comment type="subcellular location">
    <subcellularLocation>
        <location evidence="2">Cytoplasm</location>
    </subcellularLocation>
</comment>
<comment type="tissue specificity">
    <text evidence="3">Ubiquitously expressed.</text>
</comment>
<comment type="disruption phenotype">
    <text evidence="4">Embryonic lethality due to defects in chromosome segregation during cell division, resulting in aneuploidy and loss of genomic stability.</text>
</comment>
<comment type="similarity">
    <text evidence="6">Belongs to the eukaryotic release factor 1 family. Pelota subfamily.</text>
</comment>
<proteinExistence type="evidence at protein level"/>
<keyword id="KW-0131">Cell cycle</keyword>
<keyword id="KW-0132">Cell division</keyword>
<keyword id="KW-0963">Cytoplasm</keyword>
<keyword id="KW-1017">Isopeptide bond</keyword>
<keyword id="KW-0479">Metal-binding</keyword>
<keyword id="KW-0597">Phosphoprotein</keyword>
<keyword id="KW-1185">Reference proteome</keyword>
<keyword id="KW-0810">Translation regulation</keyword>
<keyword id="KW-0832">Ubl conjugation</keyword>
<gene>
    <name evidence="5 7" type="primary">Pelo</name>
</gene>
<name>PELO_MOUSE</name>
<evidence type="ECO:0000250" key="1">
    <source>
        <dbReference type="UniProtKB" id="P33309"/>
    </source>
</evidence>
<evidence type="ECO:0000250" key="2">
    <source>
        <dbReference type="UniProtKB" id="Q9BRX2"/>
    </source>
</evidence>
<evidence type="ECO:0000269" key="3">
    <source>
    </source>
</evidence>
<evidence type="ECO:0000269" key="4">
    <source>
    </source>
</evidence>
<evidence type="ECO:0000303" key="5">
    <source>
    </source>
</evidence>
<evidence type="ECO:0000305" key="6"/>
<evidence type="ECO:0000312" key="7">
    <source>
        <dbReference type="MGI" id="MGI:2145154"/>
    </source>
</evidence>
<sequence>MKLVRKDIEKDNAGQVTLVPEEPEDMWHTFNLVQVGDSLRASTIRKVQTESSTGSVGSNRVRTTLTLCVEAIDFDSQACQLRVKGTNIQENEYVKMGAYHTIELEPNRQFTLAKKQWDSVVLERIEQACDPAWSADVAAVVMQEGLAHVCLVTPSMTLTRAKVEVNIPRKRKGNCSQHDRALERFYEQVVQAIQRHINFEVVKCVLVASPGFVREQFCDYMFQQAVKTDNKVLLENRSKFLQVHASSGHKYSLKEALCDPTVASRLSDTKAAGEVKALDDFYKMLQHEPDRAFYGLKQVERANEALAIDTLLISDELFRHQDVATRSRYVRLVDSVKENAGTVRIFSSLHVSGEQLGQLTGVAAILRFPVPELSDQEDDSSSEED</sequence>
<reference key="1">
    <citation type="journal article" date="2002" name="Cytogenet. Genome Res.">
        <title>Mouse pelota gene (Pelo): cDNA cloning, genomic structure, and chromosomal localization.</title>
        <authorList>
            <person name="Shamsadin R."/>
            <person name="Adham I.M."/>
            <person name="Engel W."/>
        </authorList>
    </citation>
    <scope>NUCLEOTIDE SEQUENCE [GENOMIC DNA / MRNA]</scope>
    <scope>TISSUE SPECIFICITY</scope>
    <source>
        <strain>129/Sv</strain>
        <tissue>Testis</tissue>
    </source>
</reference>
<reference key="2">
    <citation type="journal article" date="2005" name="Science">
        <title>The transcriptional landscape of the mammalian genome.</title>
        <authorList>
            <person name="Carninci P."/>
            <person name="Kasukawa T."/>
            <person name="Katayama S."/>
            <person name="Gough J."/>
            <person name="Frith M.C."/>
            <person name="Maeda N."/>
            <person name="Oyama R."/>
            <person name="Ravasi T."/>
            <person name="Lenhard B."/>
            <person name="Wells C."/>
            <person name="Kodzius R."/>
            <person name="Shimokawa K."/>
            <person name="Bajic V.B."/>
            <person name="Brenner S.E."/>
            <person name="Batalov S."/>
            <person name="Forrest A.R."/>
            <person name="Zavolan M."/>
            <person name="Davis M.J."/>
            <person name="Wilming L.G."/>
            <person name="Aidinis V."/>
            <person name="Allen J.E."/>
            <person name="Ambesi-Impiombato A."/>
            <person name="Apweiler R."/>
            <person name="Aturaliya R.N."/>
            <person name="Bailey T.L."/>
            <person name="Bansal M."/>
            <person name="Baxter L."/>
            <person name="Beisel K.W."/>
            <person name="Bersano T."/>
            <person name="Bono H."/>
            <person name="Chalk A.M."/>
            <person name="Chiu K.P."/>
            <person name="Choudhary V."/>
            <person name="Christoffels A."/>
            <person name="Clutterbuck D.R."/>
            <person name="Crowe M.L."/>
            <person name="Dalla E."/>
            <person name="Dalrymple B.P."/>
            <person name="de Bono B."/>
            <person name="Della Gatta G."/>
            <person name="di Bernardo D."/>
            <person name="Down T."/>
            <person name="Engstrom P."/>
            <person name="Fagiolini M."/>
            <person name="Faulkner G."/>
            <person name="Fletcher C.F."/>
            <person name="Fukushima T."/>
            <person name="Furuno M."/>
            <person name="Futaki S."/>
            <person name="Gariboldi M."/>
            <person name="Georgii-Hemming P."/>
            <person name="Gingeras T.R."/>
            <person name="Gojobori T."/>
            <person name="Green R.E."/>
            <person name="Gustincich S."/>
            <person name="Harbers M."/>
            <person name="Hayashi Y."/>
            <person name="Hensch T.K."/>
            <person name="Hirokawa N."/>
            <person name="Hill D."/>
            <person name="Huminiecki L."/>
            <person name="Iacono M."/>
            <person name="Ikeo K."/>
            <person name="Iwama A."/>
            <person name="Ishikawa T."/>
            <person name="Jakt M."/>
            <person name="Kanapin A."/>
            <person name="Katoh M."/>
            <person name="Kawasawa Y."/>
            <person name="Kelso J."/>
            <person name="Kitamura H."/>
            <person name="Kitano H."/>
            <person name="Kollias G."/>
            <person name="Krishnan S.P."/>
            <person name="Kruger A."/>
            <person name="Kummerfeld S.K."/>
            <person name="Kurochkin I.V."/>
            <person name="Lareau L.F."/>
            <person name="Lazarevic D."/>
            <person name="Lipovich L."/>
            <person name="Liu J."/>
            <person name="Liuni S."/>
            <person name="McWilliam S."/>
            <person name="Madan Babu M."/>
            <person name="Madera M."/>
            <person name="Marchionni L."/>
            <person name="Matsuda H."/>
            <person name="Matsuzawa S."/>
            <person name="Miki H."/>
            <person name="Mignone F."/>
            <person name="Miyake S."/>
            <person name="Morris K."/>
            <person name="Mottagui-Tabar S."/>
            <person name="Mulder N."/>
            <person name="Nakano N."/>
            <person name="Nakauchi H."/>
            <person name="Ng P."/>
            <person name="Nilsson R."/>
            <person name="Nishiguchi S."/>
            <person name="Nishikawa S."/>
            <person name="Nori F."/>
            <person name="Ohara O."/>
            <person name="Okazaki Y."/>
            <person name="Orlando V."/>
            <person name="Pang K.C."/>
            <person name="Pavan W.J."/>
            <person name="Pavesi G."/>
            <person name="Pesole G."/>
            <person name="Petrovsky N."/>
            <person name="Piazza S."/>
            <person name="Reed J."/>
            <person name="Reid J.F."/>
            <person name="Ring B.Z."/>
            <person name="Ringwald M."/>
            <person name="Rost B."/>
            <person name="Ruan Y."/>
            <person name="Salzberg S.L."/>
            <person name="Sandelin A."/>
            <person name="Schneider C."/>
            <person name="Schoenbach C."/>
            <person name="Sekiguchi K."/>
            <person name="Semple C.A."/>
            <person name="Seno S."/>
            <person name="Sessa L."/>
            <person name="Sheng Y."/>
            <person name="Shibata Y."/>
            <person name="Shimada H."/>
            <person name="Shimada K."/>
            <person name="Silva D."/>
            <person name="Sinclair B."/>
            <person name="Sperling S."/>
            <person name="Stupka E."/>
            <person name="Sugiura K."/>
            <person name="Sultana R."/>
            <person name="Takenaka Y."/>
            <person name="Taki K."/>
            <person name="Tammoja K."/>
            <person name="Tan S.L."/>
            <person name="Tang S."/>
            <person name="Taylor M.S."/>
            <person name="Tegner J."/>
            <person name="Teichmann S.A."/>
            <person name="Ueda H.R."/>
            <person name="van Nimwegen E."/>
            <person name="Verardo R."/>
            <person name="Wei C.L."/>
            <person name="Yagi K."/>
            <person name="Yamanishi H."/>
            <person name="Zabarovsky E."/>
            <person name="Zhu S."/>
            <person name="Zimmer A."/>
            <person name="Hide W."/>
            <person name="Bult C."/>
            <person name="Grimmond S.M."/>
            <person name="Teasdale R.D."/>
            <person name="Liu E.T."/>
            <person name="Brusic V."/>
            <person name="Quackenbush J."/>
            <person name="Wahlestedt C."/>
            <person name="Mattick J.S."/>
            <person name="Hume D.A."/>
            <person name="Kai C."/>
            <person name="Sasaki D."/>
            <person name="Tomaru Y."/>
            <person name="Fukuda S."/>
            <person name="Kanamori-Katayama M."/>
            <person name="Suzuki M."/>
            <person name="Aoki J."/>
            <person name="Arakawa T."/>
            <person name="Iida J."/>
            <person name="Imamura K."/>
            <person name="Itoh M."/>
            <person name="Kato T."/>
            <person name="Kawaji H."/>
            <person name="Kawagashira N."/>
            <person name="Kawashima T."/>
            <person name="Kojima M."/>
            <person name="Kondo S."/>
            <person name="Konno H."/>
            <person name="Nakano K."/>
            <person name="Ninomiya N."/>
            <person name="Nishio T."/>
            <person name="Okada M."/>
            <person name="Plessy C."/>
            <person name="Shibata K."/>
            <person name="Shiraki T."/>
            <person name="Suzuki S."/>
            <person name="Tagami M."/>
            <person name="Waki K."/>
            <person name="Watahiki A."/>
            <person name="Okamura-Oho Y."/>
            <person name="Suzuki H."/>
            <person name="Kawai J."/>
            <person name="Hayashizaki Y."/>
        </authorList>
    </citation>
    <scope>NUCLEOTIDE SEQUENCE [LARGE SCALE MRNA]</scope>
    <source>
        <strain>NOD</strain>
    </source>
</reference>
<reference key="3">
    <citation type="journal article" date="2004" name="Genome Res.">
        <title>The status, quality, and expansion of the NIH full-length cDNA project: the Mammalian Gene Collection (MGC).</title>
        <authorList>
            <consortium name="The MGC Project Team"/>
        </authorList>
    </citation>
    <scope>NUCLEOTIDE SEQUENCE [LARGE SCALE MRNA]</scope>
    <source>
        <tissue>Mammary gland</tissue>
        <tissue>Pancreas</tissue>
    </source>
</reference>
<reference key="4">
    <citation type="journal article" date="2003" name="Mol. Cell. Biol.">
        <title>Disruption of the pelota gene causes early embryonic lethality and defects in cell cycle progression.</title>
        <authorList>
            <person name="Adham I.M."/>
            <person name="Sallam M.A."/>
            <person name="Steding G."/>
            <person name="Korabiowska M."/>
            <person name="Brinck U."/>
            <person name="Hoyer-Fender S."/>
            <person name="Oh C."/>
            <person name="Engel W."/>
        </authorList>
    </citation>
    <scope>FUNCTION</scope>
    <scope>DISRUPTION PHENOTYPE</scope>
</reference>
<reference key="5">
    <citation type="journal article" date="2010" name="Cell">
        <title>A tissue-specific atlas of mouse protein phosphorylation and expression.</title>
        <authorList>
            <person name="Huttlin E.L."/>
            <person name="Jedrychowski M.P."/>
            <person name="Elias J.E."/>
            <person name="Goswami T."/>
            <person name="Rad R."/>
            <person name="Beausoleil S.A."/>
            <person name="Villen J."/>
            <person name="Haas W."/>
            <person name="Sowa M.E."/>
            <person name="Gygi S.P."/>
        </authorList>
    </citation>
    <scope>IDENTIFICATION BY MASS SPECTROMETRY [LARGE SCALE ANALYSIS]</scope>
    <source>
        <tissue>Liver</tissue>
        <tissue>Pancreas</tissue>
        <tissue>Testis</tissue>
    </source>
</reference>
<organism>
    <name type="scientific">Mus musculus</name>
    <name type="common">Mouse</name>
    <dbReference type="NCBI Taxonomy" id="10090"/>
    <lineage>
        <taxon>Eukaryota</taxon>
        <taxon>Metazoa</taxon>
        <taxon>Chordata</taxon>
        <taxon>Craniata</taxon>
        <taxon>Vertebrata</taxon>
        <taxon>Euteleostomi</taxon>
        <taxon>Mammalia</taxon>
        <taxon>Eutheria</taxon>
        <taxon>Euarchontoglires</taxon>
        <taxon>Glires</taxon>
        <taxon>Rodentia</taxon>
        <taxon>Myomorpha</taxon>
        <taxon>Muroidea</taxon>
        <taxon>Muridae</taxon>
        <taxon>Murinae</taxon>
        <taxon>Mus</taxon>
        <taxon>Mus</taxon>
    </lineage>
</organism>
<accession>Q80X73</accession>
<accession>Q3TCN0</accession>
<accession>Q6PG91</accession>
<accession>Q91UZ2</accession>
<feature type="chain" id="PRO_0000143189" description="Protein pelota homolog">
    <location>
        <begin position="1"/>
        <end position="385"/>
    </location>
</feature>
<feature type="modified residue" description="Phosphoserine" evidence="2">
    <location>
        <position position="374"/>
    </location>
</feature>
<feature type="modified residue" description="Phosphoserine" evidence="2">
    <location>
        <position position="380"/>
    </location>
</feature>
<feature type="modified residue" description="Phosphoserine" evidence="2">
    <location>
        <position position="381"/>
    </location>
</feature>
<feature type="modified residue" description="Phosphoserine" evidence="2">
    <location>
        <position position="382"/>
    </location>
</feature>
<feature type="cross-link" description="Glycyl lysine isopeptide (Lys-Gly) (interchain with G-Cter in SUMO2)" evidence="2">
    <location>
        <position position="162"/>
    </location>
</feature>
<feature type="sequence conflict" description="In Ref. 1; AAK58116/AAK58117 and 3; AAH57160." evidence="6" ref="1 3">
    <original>F</original>
    <variation>Y</variation>
    <location>
        <position position="30"/>
    </location>
</feature>
<feature type="sequence conflict" description="In Ref. 1; AAK58116/AAK58117." evidence="6" ref="1">
    <original>I</original>
    <variation>F</variation>
    <location>
        <position position="125"/>
    </location>
</feature>
<feature type="sequence conflict" description="In Ref. 1; AAK58116/AAK58117." evidence="6" ref="1">
    <original>R</original>
    <variation>P</variation>
    <location>
        <position position="180"/>
    </location>
</feature>
<feature type="sequence conflict" description="In Ref. 1; AAK58116/AAK58117." evidence="6" ref="1">
    <original>D</original>
    <variation>H</variation>
    <location>
        <position position="268"/>
    </location>
</feature>
<feature type="sequence conflict" description="In Ref. 3; AAH50209." evidence="6" ref="3">
    <original>G</original>
    <variation>V</variation>
    <location>
        <position position="273"/>
    </location>
</feature>
<feature type="sequence conflict" description="In Ref. 3; AAH50209." evidence="6" ref="3">
    <original>L</original>
    <variation>F</variation>
    <location>
        <position position="366"/>
    </location>
</feature>
<dbReference type="EMBL" id="AF148638">
    <property type="protein sequence ID" value="AAK58116.1"/>
    <property type="molecule type" value="mRNA"/>
</dbReference>
<dbReference type="EMBL" id="AF148639">
    <property type="protein sequence ID" value="AAK58117.1"/>
    <property type="molecule type" value="Genomic_DNA"/>
</dbReference>
<dbReference type="EMBL" id="AK170635">
    <property type="protein sequence ID" value="BAE41926.1"/>
    <property type="molecule type" value="mRNA"/>
</dbReference>
<dbReference type="EMBL" id="BC050209">
    <property type="protein sequence ID" value="AAH50209.1"/>
    <property type="molecule type" value="mRNA"/>
</dbReference>
<dbReference type="EMBL" id="BC057160">
    <property type="protein sequence ID" value="AAH57160.1"/>
    <property type="molecule type" value="mRNA"/>
</dbReference>
<dbReference type="CCDS" id="CCDS26788.1"/>
<dbReference type="RefSeq" id="NP_598819.2">
    <property type="nucleotide sequence ID" value="NM_134058.3"/>
</dbReference>
<dbReference type="SMR" id="Q80X73"/>
<dbReference type="BioGRID" id="222760">
    <property type="interactions" value="5"/>
</dbReference>
<dbReference type="DIP" id="DIP-61683N"/>
<dbReference type="FunCoup" id="Q80X73">
    <property type="interactions" value="1363"/>
</dbReference>
<dbReference type="IntAct" id="Q80X73">
    <property type="interactions" value="2"/>
</dbReference>
<dbReference type="STRING" id="10090.ENSMUSP00000104849"/>
<dbReference type="iPTMnet" id="Q80X73"/>
<dbReference type="PhosphoSitePlus" id="Q80X73"/>
<dbReference type="PaxDb" id="10090-ENSMUSP00000104849"/>
<dbReference type="ProteomicsDB" id="289346"/>
<dbReference type="Pumba" id="Q80X73"/>
<dbReference type="Antibodypedia" id="23309">
    <property type="antibodies" value="157 antibodies from 25 providers"/>
</dbReference>
<dbReference type="DNASU" id="105083"/>
<dbReference type="Ensembl" id="ENSMUST00000109226.5">
    <property type="protein sequence ID" value="ENSMUSP00000104849.4"/>
    <property type="gene ID" value="ENSMUSG00000042275.10"/>
</dbReference>
<dbReference type="GeneID" id="105083"/>
<dbReference type="KEGG" id="mmu:105083"/>
<dbReference type="UCSC" id="uc007ryb.2">
    <property type="organism name" value="mouse"/>
</dbReference>
<dbReference type="AGR" id="MGI:2145154"/>
<dbReference type="CTD" id="53918"/>
<dbReference type="MGI" id="MGI:2145154">
    <property type="gene designation" value="Pelo"/>
</dbReference>
<dbReference type="VEuPathDB" id="HostDB:ENSMUSG00000042275"/>
<dbReference type="eggNOG" id="KOG2869">
    <property type="taxonomic scope" value="Eukaryota"/>
</dbReference>
<dbReference type="GeneTree" id="ENSGT00390000016326"/>
<dbReference type="HOGENOM" id="CLU_023334_3_1_1"/>
<dbReference type="InParanoid" id="Q80X73"/>
<dbReference type="OMA" id="DDLWHLK"/>
<dbReference type="OrthoDB" id="10249111at2759"/>
<dbReference type="PhylomeDB" id="Q80X73"/>
<dbReference type="TreeFam" id="TF105733"/>
<dbReference type="BioGRID-ORCS" id="105083">
    <property type="hits" value="32 hits in 78 CRISPR screens"/>
</dbReference>
<dbReference type="PRO" id="PR:Q80X73"/>
<dbReference type="Proteomes" id="UP000000589">
    <property type="component" value="Chromosome 13"/>
</dbReference>
<dbReference type="RNAct" id="Q80X73">
    <property type="molecule type" value="protein"/>
</dbReference>
<dbReference type="Bgee" id="ENSMUSG00000042275">
    <property type="expression patterns" value="Expressed in urethra and 86 other cell types or tissues"/>
</dbReference>
<dbReference type="GO" id="GO:0005737">
    <property type="term" value="C:cytoplasm"/>
    <property type="evidence" value="ECO:0000304"/>
    <property type="project" value="MGI"/>
</dbReference>
<dbReference type="GO" id="GO:0022626">
    <property type="term" value="C:cytosolic ribosome"/>
    <property type="evidence" value="ECO:0007669"/>
    <property type="project" value="Ensembl"/>
</dbReference>
<dbReference type="GO" id="GO:1990533">
    <property type="term" value="C:Dom34-Hbs1 complex"/>
    <property type="evidence" value="ECO:0000250"/>
    <property type="project" value="UniProtKB"/>
</dbReference>
<dbReference type="GO" id="GO:0046872">
    <property type="term" value="F:metal ion binding"/>
    <property type="evidence" value="ECO:0007669"/>
    <property type="project" value="UniProtKB-KW"/>
</dbReference>
<dbReference type="GO" id="GO:0060589">
    <property type="term" value="F:nucleoside-triphosphatase regulator activity"/>
    <property type="evidence" value="ECO:0007669"/>
    <property type="project" value="Ensembl"/>
</dbReference>
<dbReference type="GO" id="GO:0043022">
    <property type="term" value="F:ribosome binding"/>
    <property type="evidence" value="ECO:0000250"/>
    <property type="project" value="UniProtKB"/>
</dbReference>
<dbReference type="GO" id="GO:0170011">
    <property type="term" value="F:stalled ribosome sensor activity"/>
    <property type="evidence" value="ECO:0007669"/>
    <property type="project" value="Ensembl"/>
</dbReference>
<dbReference type="GO" id="GO:0051301">
    <property type="term" value="P:cell division"/>
    <property type="evidence" value="ECO:0007669"/>
    <property type="project" value="UniProtKB-KW"/>
</dbReference>
<dbReference type="GO" id="GO:0051276">
    <property type="term" value="P:chromosome organization"/>
    <property type="evidence" value="ECO:0000315"/>
    <property type="project" value="MGI"/>
</dbReference>
<dbReference type="GO" id="GO:0007492">
    <property type="term" value="P:endoderm development"/>
    <property type="evidence" value="ECO:0000314"/>
    <property type="project" value="MGI"/>
</dbReference>
<dbReference type="GO" id="GO:0001833">
    <property type="term" value="P:inner cell mass cell proliferation"/>
    <property type="evidence" value="ECO:0000315"/>
    <property type="project" value="MGI"/>
</dbReference>
<dbReference type="GO" id="GO:0060231">
    <property type="term" value="P:mesenchymal to epithelial transition"/>
    <property type="evidence" value="ECO:0000315"/>
    <property type="project" value="MGI"/>
</dbReference>
<dbReference type="GO" id="GO:0070966">
    <property type="term" value="P:nuclear-transcribed mRNA catabolic process, no-go decay"/>
    <property type="evidence" value="ECO:0000250"/>
    <property type="project" value="UniProtKB"/>
</dbReference>
<dbReference type="GO" id="GO:0070481">
    <property type="term" value="P:nuclear-transcribed mRNA catabolic process, non-stop decay"/>
    <property type="evidence" value="ECO:0007669"/>
    <property type="project" value="InterPro"/>
</dbReference>
<dbReference type="GO" id="GO:0030513">
    <property type="term" value="P:positive regulation of BMP signaling pathway"/>
    <property type="evidence" value="ECO:0000315"/>
    <property type="project" value="MGI"/>
</dbReference>
<dbReference type="GO" id="GO:0006417">
    <property type="term" value="P:regulation of translation"/>
    <property type="evidence" value="ECO:0007669"/>
    <property type="project" value="UniProtKB-KW"/>
</dbReference>
<dbReference type="GO" id="GO:0072344">
    <property type="term" value="P:rescue of stalled ribosome"/>
    <property type="evidence" value="ECO:0000250"/>
    <property type="project" value="UniProtKB"/>
</dbReference>
<dbReference type="GO" id="GO:0032790">
    <property type="term" value="P:ribosome disassembly"/>
    <property type="evidence" value="ECO:0000250"/>
    <property type="project" value="UniProtKB"/>
</dbReference>
<dbReference type="GO" id="GO:0071025">
    <property type="term" value="P:RNA surveillance"/>
    <property type="evidence" value="ECO:0007669"/>
    <property type="project" value="InterPro"/>
</dbReference>
<dbReference type="GO" id="GO:0019827">
    <property type="term" value="P:stem cell population maintenance"/>
    <property type="evidence" value="ECO:0000315"/>
    <property type="project" value="MGI"/>
</dbReference>
<dbReference type="FunFam" id="2.30.30.870:FF:000001">
    <property type="entry name" value="Protein pelota homolog"/>
    <property type="match status" value="1"/>
</dbReference>
<dbReference type="FunFam" id="3.30.1330.30:FF:000008">
    <property type="entry name" value="Protein pelota homolog"/>
    <property type="match status" value="1"/>
</dbReference>
<dbReference type="FunFam" id="3.30.420.60:FF:000002">
    <property type="entry name" value="Protein pelota homolog"/>
    <property type="match status" value="1"/>
</dbReference>
<dbReference type="Gene3D" id="3.30.1330.30">
    <property type="match status" value="1"/>
</dbReference>
<dbReference type="Gene3D" id="3.30.420.60">
    <property type="entry name" value="eRF1 domain 2"/>
    <property type="match status" value="1"/>
</dbReference>
<dbReference type="Gene3D" id="2.30.30.870">
    <property type="entry name" value="Pelota, domain A"/>
    <property type="match status" value="1"/>
</dbReference>
<dbReference type="InterPro" id="IPR042226">
    <property type="entry name" value="eFR1_2_sf"/>
</dbReference>
<dbReference type="InterPro" id="IPR005140">
    <property type="entry name" value="eRF1_1_Pelota"/>
</dbReference>
<dbReference type="InterPro" id="IPR005141">
    <property type="entry name" value="eRF1_2"/>
</dbReference>
<dbReference type="InterPro" id="IPR005142">
    <property type="entry name" value="eRF1_3"/>
</dbReference>
<dbReference type="InterPro" id="IPR038069">
    <property type="entry name" value="Pelota/DOM34_N"/>
</dbReference>
<dbReference type="InterPro" id="IPR029064">
    <property type="entry name" value="Ribosomal_eL30-like_sf"/>
</dbReference>
<dbReference type="InterPro" id="IPR004405">
    <property type="entry name" value="Transl-rel_pelota"/>
</dbReference>
<dbReference type="NCBIfam" id="TIGR00111">
    <property type="entry name" value="pelota"/>
    <property type="match status" value="1"/>
</dbReference>
<dbReference type="PANTHER" id="PTHR10853">
    <property type="entry name" value="PELOTA"/>
    <property type="match status" value="1"/>
</dbReference>
<dbReference type="PANTHER" id="PTHR10853:SF0">
    <property type="entry name" value="PROTEIN PELOTA HOMOLOG"/>
    <property type="match status" value="1"/>
</dbReference>
<dbReference type="Pfam" id="PF03463">
    <property type="entry name" value="eRF1_1"/>
    <property type="match status" value="1"/>
</dbReference>
<dbReference type="Pfam" id="PF03464">
    <property type="entry name" value="eRF1_2"/>
    <property type="match status" value="1"/>
</dbReference>
<dbReference type="Pfam" id="PF03465">
    <property type="entry name" value="eRF1_3"/>
    <property type="match status" value="1"/>
</dbReference>
<dbReference type="SMART" id="SM01194">
    <property type="entry name" value="eRF1_1"/>
    <property type="match status" value="1"/>
</dbReference>
<dbReference type="SUPFAM" id="SSF159065">
    <property type="entry name" value="Dom34/Pelota N-terminal domain-like"/>
    <property type="match status" value="1"/>
</dbReference>
<dbReference type="SUPFAM" id="SSF55315">
    <property type="entry name" value="L30e-like"/>
    <property type="match status" value="1"/>
</dbReference>
<dbReference type="SUPFAM" id="SSF53137">
    <property type="entry name" value="Translational machinery components"/>
    <property type="match status" value="1"/>
</dbReference>